<comment type="function">
    <text evidence="1">Catalyzes the NADPH-dependent rearrangement and reduction of 1-deoxy-D-xylulose-5-phosphate (DXP) to 2-C-methyl-D-erythritol 4-phosphate (MEP).</text>
</comment>
<comment type="catalytic activity">
    <reaction evidence="1">
        <text>2-C-methyl-D-erythritol 4-phosphate + NADP(+) = 1-deoxy-D-xylulose 5-phosphate + NADPH + H(+)</text>
        <dbReference type="Rhea" id="RHEA:13717"/>
        <dbReference type="ChEBI" id="CHEBI:15378"/>
        <dbReference type="ChEBI" id="CHEBI:57783"/>
        <dbReference type="ChEBI" id="CHEBI:57792"/>
        <dbReference type="ChEBI" id="CHEBI:58262"/>
        <dbReference type="ChEBI" id="CHEBI:58349"/>
        <dbReference type="EC" id="1.1.1.267"/>
    </reaction>
    <physiologicalReaction direction="right-to-left" evidence="1">
        <dbReference type="Rhea" id="RHEA:13719"/>
    </physiologicalReaction>
</comment>
<comment type="cofactor">
    <cofactor evidence="1">
        <name>Mg(2+)</name>
        <dbReference type="ChEBI" id="CHEBI:18420"/>
    </cofactor>
    <cofactor evidence="1">
        <name>Mn(2+)</name>
        <dbReference type="ChEBI" id="CHEBI:29035"/>
    </cofactor>
</comment>
<comment type="pathway">
    <text evidence="1">Isoprenoid biosynthesis; isopentenyl diphosphate biosynthesis via DXP pathway; isopentenyl diphosphate from 1-deoxy-D-xylulose 5-phosphate: step 1/6.</text>
</comment>
<comment type="similarity">
    <text evidence="1">Belongs to the DXR family.</text>
</comment>
<accession>B8F4X2</accession>
<feature type="chain" id="PRO_1000124094" description="1-deoxy-D-xylulose 5-phosphate reductoisomerase">
    <location>
        <begin position="1"/>
        <end position="396"/>
    </location>
</feature>
<feature type="binding site" evidence="1">
    <location>
        <position position="10"/>
    </location>
    <ligand>
        <name>NADPH</name>
        <dbReference type="ChEBI" id="CHEBI:57783"/>
    </ligand>
</feature>
<feature type="binding site" evidence="1">
    <location>
        <position position="11"/>
    </location>
    <ligand>
        <name>NADPH</name>
        <dbReference type="ChEBI" id="CHEBI:57783"/>
    </ligand>
</feature>
<feature type="binding site" evidence="1">
    <location>
        <position position="12"/>
    </location>
    <ligand>
        <name>NADPH</name>
        <dbReference type="ChEBI" id="CHEBI:57783"/>
    </ligand>
</feature>
<feature type="binding site" evidence="1">
    <location>
        <position position="13"/>
    </location>
    <ligand>
        <name>NADPH</name>
        <dbReference type="ChEBI" id="CHEBI:57783"/>
    </ligand>
</feature>
<feature type="binding site" evidence="1">
    <location>
        <position position="36"/>
    </location>
    <ligand>
        <name>NADPH</name>
        <dbReference type="ChEBI" id="CHEBI:57783"/>
    </ligand>
</feature>
<feature type="binding site" evidence="1">
    <location>
        <position position="37"/>
    </location>
    <ligand>
        <name>NADPH</name>
        <dbReference type="ChEBI" id="CHEBI:57783"/>
    </ligand>
</feature>
<feature type="binding site" evidence="1">
    <location>
        <position position="38"/>
    </location>
    <ligand>
        <name>NADPH</name>
        <dbReference type="ChEBI" id="CHEBI:57783"/>
    </ligand>
</feature>
<feature type="binding site" evidence="1">
    <location>
        <position position="124"/>
    </location>
    <ligand>
        <name>NADPH</name>
        <dbReference type="ChEBI" id="CHEBI:57783"/>
    </ligand>
</feature>
<feature type="binding site" evidence="1">
    <location>
        <position position="125"/>
    </location>
    <ligand>
        <name>1-deoxy-D-xylulose 5-phosphate</name>
        <dbReference type="ChEBI" id="CHEBI:57792"/>
    </ligand>
</feature>
<feature type="binding site" evidence="1">
    <location>
        <position position="126"/>
    </location>
    <ligand>
        <name>NADPH</name>
        <dbReference type="ChEBI" id="CHEBI:57783"/>
    </ligand>
</feature>
<feature type="binding site" evidence="1">
    <location>
        <position position="150"/>
    </location>
    <ligand>
        <name>Mn(2+)</name>
        <dbReference type="ChEBI" id="CHEBI:29035"/>
    </ligand>
</feature>
<feature type="binding site" evidence="1">
    <location>
        <position position="151"/>
    </location>
    <ligand>
        <name>1-deoxy-D-xylulose 5-phosphate</name>
        <dbReference type="ChEBI" id="CHEBI:57792"/>
    </ligand>
</feature>
<feature type="binding site" evidence="1">
    <location>
        <position position="152"/>
    </location>
    <ligand>
        <name>1-deoxy-D-xylulose 5-phosphate</name>
        <dbReference type="ChEBI" id="CHEBI:57792"/>
    </ligand>
</feature>
<feature type="binding site" evidence="1">
    <location>
        <position position="152"/>
    </location>
    <ligand>
        <name>Mn(2+)</name>
        <dbReference type="ChEBI" id="CHEBI:29035"/>
    </ligand>
</feature>
<feature type="binding site" evidence="1">
    <location>
        <position position="186"/>
    </location>
    <ligand>
        <name>1-deoxy-D-xylulose 5-phosphate</name>
        <dbReference type="ChEBI" id="CHEBI:57792"/>
    </ligand>
</feature>
<feature type="binding site" evidence="1">
    <location>
        <position position="209"/>
    </location>
    <ligand>
        <name>1-deoxy-D-xylulose 5-phosphate</name>
        <dbReference type="ChEBI" id="CHEBI:57792"/>
    </ligand>
</feature>
<feature type="binding site" evidence="1">
    <location>
        <position position="215"/>
    </location>
    <ligand>
        <name>NADPH</name>
        <dbReference type="ChEBI" id="CHEBI:57783"/>
    </ligand>
</feature>
<feature type="binding site" evidence="1">
    <location>
        <position position="222"/>
    </location>
    <ligand>
        <name>1-deoxy-D-xylulose 5-phosphate</name>
        <dbReference type="ChEBI" id="CHEBI:57792"/>
    </ligand>
</feature>
<feature type="binding site" evidence="1">
    <location>
        <position position="227"/>
    </location>
    <ligand>
        <name>1-deoxy-D-xylulose 5-phosphate</name>
        <dbReference type="ChEBI" id="CHEBI:57792"/>
    </ligand>
</feature>
<feature type="binding site" evidence="1">
    <location>
        <position position="228"/>
    </location>
    <ligand>
        <name>1-deoxy-D-xylulose 5-phosphate</name>
        <dbReference type="ChEBI" id="CHEBI:57792"/>
    </ligand>
</feature>
<feature type="binding site" evidence="1">
    <location>
        <position position="231"/>
    </location>
    <ligand>
        <name>1-deoxy-D-xylulose 5-phosphate</name>
        <dbReference type="ChEBI" id="CHEBI:57792"/>
    </ligand>
</feature>
<feature type="binding site" evidence="1">
    <location>
        <position position="231"/>
    </location>
    <ligand>
        <name>Mn(2+)</name>
        <dbReference type="ChEBI" id="CHEBI:29035"/>
    </ligand>
</feature>
<evidence type="ECO:0000255" key="1">
    <source>
        <dbReference type="HAMAP-Rule" id="MF_00183"/>
    </source>
</evidence>
<keyword id="KW-0414">Isoprene biosynthesis</keyword>
<keyword id="KW-0464">Manganese</keyword>
<keyword id="KW-0479">Metal-binding</keyword>
<keyword id="KW-0521">NADP</keyword>
<keyword id="KW-0560">Oxidoreductase</keyword>
<keyword id="KW-1185">Reference proteome</keyword>
<gene>
    <name evidence="1" type="primary">dxr</name>
    <name type="ordered locus">HAPS_0729</name>
</gene>
<organism>
    <name type="scientific">Glaesserella parasuis serovar 5 (strain SH0165)</name>
    <name type="common">Haemophilus parasuis</name>
    <dbReference type="NCBI Taxonomy" id="557723"/>
    <lineage>
        <taxon>Bacteria</taxon>
        <taxon>Pseudomonadati</taxon>
        <taxon>Pseudomonadota</taxon>
        <taxon>Gammaproteobacteria</taxon>
        <taxon>Pasteurellales</taxon>
        <taxon>Pasteurellaceae</taxon>
        <taxon>Glaesserella</taxon>
    </lineage>
</organism>
<name>DXR_GLAP5</name>
<reference key="1">
    <citation type="journal article" date="2009" name="J. Bacteriol.">
        <title>Complete genome sequence of Haemophilus parasuis SH0165.</title>
        <authorList>
            <person name="Yue M."/>
            <person name="Yang F."/>
            <person name="Yang J."/>
            <person name="Bei W."/>
            <person name="Cai X."/>
            <person name="Chen L."/>
            <person name="Dong J."/>
            <person name="Zhou R."/>
            <person name="Jin M."/>
            <person name="Jin Q."/>
            <person name="Chen H."/>
        </authorList>
    </citation>
    <scope>NUCLEOTIDE SEQUENCE [LARGE SCALE GENOMIC DNA]</scope>
    <source>
        <strain>SH0165</strain>
    </source>
</reference>
<protein>
    <recommendedName>
        <fullName evidence="1">1-deoxy-D-xylulose 5-phosphate reductoisomerase</fullName>
        <shortName evidence="1">DXP reductoisomerase</shortName>
        <ecNumber evidence="1">1.1.1.267</ecNumber>
    </recommendedName>
    <alternativeName>
        <fullName evidence="1">1-deoxyxylulose-5-phosphate reductoisomerase</fullName>
    </alternativeName>
    <alternativeName>
        <fullName evidence="1">2-C-methyl-D-erythritol 4-phosphate synthase</fullName>
    </alternativeName>
</protein>
<proteinExistence type="inferred from homology"/>
<sequence length="396" mass="43245">MQKLVILGSTGSIGKSTLSVVDNNPEQYQVFALVGGKNVELITEQCQQYQPRFVALDDEQAAAKLKENLTALGLKIEVLAGQKAIYELASHPEVDMVMAAIVGAAGLLPTLSAVQAGKKVLLANKESLVTCGQIFIDEARKSGAKLLPVDSEHNAIFQSLPPEAQEKVGFCPLAELGVSKIILTGSGGPFCTKPLNEFSQITPAQAVAHPNWSMGKKISVDSATMMNKGLEYIEARWLFNASADEMEIIIHPQSIIHSMVRYIDGSVIAQMGNPDMRTPIAHTMAYPNRIYAGVAPLDFFKLKELTFIEPDFARYPNLKLAIEAFAEGQYATTAMNAANEIAVEAFLNDQIRFTDIVEVNRQVVENIAPVQVKEIADVLHIDKLAREVAKQHILQF</sequence>
<dbReference type="EC" id="1.1.1.267" evidence="1"/>
<dbReference type="EMBL" id="CP001321">
    <property type="protein sequence ID" value="ACL32374.1"/>
    <property type="molecule type" value="Genomic_DNA"/>
</dbReference>
<dbReference type="SMR" id="B8F4X2"/>
<dbReference type="STRING" id="557723.HAPS_0729"/>
<dbReference type="KEGG" id="hap:HAPS_0729"/>
<dbReference type="PATRIC" id="fig|557723.8.peg.729"/>
<dbReference type="HOGENOM" id="CLU_035714_4_0_6"/>
<dbReference type="UniPathway" id="UPA00056">
    <property type="reaction ID" value="UER00092"/>
</dbReference>
<dbReference type="Proteomes" id="UP000006743">
    <property type="component" value="Chromosome"/>
</dbReference>
<dbReference type="GO" id="GO:0030604">
    <property type="term" value="F:1-deoxy-D-xylulose-5-phosphate reductoisomerase activity"/>
    <property type="evidence" value="ECO:0007669"/>
    <property type="project" value="UniProtKB-UniRule"/>
</dbReference>
<dbReference type="GO" id="GO:0030145">
    <property type="term" value="F:manganese ion binding"/>
    <property type="evidence" value="ECO:0007669"/>
    <property type="project" value="TreeGrafter"/>
</dbReference>
<dbReference type="GO" id="GO:0070402">
    <property type="term" value="F:NADPH binding"/>
    <property type="evidence" value="ECO:0007669"/>
    <property type="project" value="InterPro"/>
</dbReference>
<dbReference type="GO" id="GO:0051484">
    <property type="term" value="P:isopentenyl diphosphate biosynthetic process, methylerythritol 4-phosphate pathway involved in terpenoid biosynthetic process"/>
    <property type="evidence" value="ECO:0007669"/>
    <property type="project" value="TreeGrafter"/>
</dbReference>
<dbReference type="FunFam" id="1.10.1740.10:FF:000004">
    <property type="entry name" value="1-deoxy-D-xylulose 5-phosphate reductoisomerase"/>
    <property type="match status" value="1"/>
</dbReference>
<dbReference type="FunFam" id="3.40.50.720:FF:000045">
    <property type="entry name" value="1-deoxy-D-xylulose 5-phosphate reductoisomerase"/>
    <property type="match status" value="1"/>
</dbReference>
<dbReference type="Gene3D" id="1.10.1740.10">
    <property type="match status" value="1"/>
</dbReference>
<dbReference type="Gene3D" id="3.40.50.720">
    <property type="entry name" value="NAD(P)-binding Rossmann-like Domain"/>
    <property type="match status" value="1"/>
</dbReference>
<dbReference type="HAMAP" id="MF_00183">
    <property type="entry name" value="DXP_reductoisom"/>
    <property type="match status" value="1"/>
</dbReference>
<dbReference type="InterPro" id="IPR003821">
    <property type="entry name" value="DXP_reductoisomerase"/>
</dbReference>
<dbReference type="InterPro" id="IPR013644">
    <property type="entry name" value="DXP_reductoisomerase_C"/>
</dbReference>
<dbReference type="InterPro" id="IPR013512">
    <property type="entry name" value="DXP_reductoisomerase_N"/>
</dbReference>
<dbReference type="InterPro" id="IPR026877">
    <property type="entry name" value="DXPR_C"/>
</dbReference>
<dbReference type="InterPro" id="IPR036169">
    <property type="entry name" value="DXPR_C_sf"/>
</dbReference>
<dbReference type="InterPro" id="IPR036291">
    <property type="entry name" value="NAD(P)-bd_dom_sf"/>
</dbReference>
<dbReference type="NCBIfam" id="TIGR00243">
    <property type="entry name" value="Dxr"/>
    <property type="match status" value="1"/>
</dbReference>
<dbReference type="NCBIfam" id="NF003938">
    <property type="entry name" value="PRK05447.1-1"/>
    <property type="match status" value="1"/>
</dbReference>
<dbReference type="NCBIfam" id="NF009114">
    <property type="entry name" value="PRK12464.1"/>
    <property type="match status" value="1"/>
</dbReference>
<dbReference type="PANTHER" id="PTHR30525">
    <property type="entry name" value="1-DEOXY-D-XYLULOSE 5-PHOSPHATE REDUCTOISOMERASE"/>
    <property type="match status" value="1"/>
</dbReference>
<dbReference type="PANTHER" id="PTHR30525:SF0">
    <property type="entry name" value="1-DEOXY-D-XYLULOSE 5-PHOSPHATE REDUCTOISOMERASE, CHLOROPLASTIC"/>
    <property type="match status" value="1"/>
</dbReference>
<dbReference type="Pfam" id="PF08436">
    <property type="entry name" value="DXP_redisom_C"/>
    <property type="match status" value="1"/>
</dbReference>
<dbReference type="Pfam" id="PF02670">
    <property type="entry name" value="DXP_reductoisom"/>
    <property type="match status" value="1"/>
</dbReference>
<dbReference type="Pfam" id="PF13288">
    <property type="entry name" value="DXPR_C"/>
    <property type="match status" value="1"/>
</dbReference>
<dbReference type="PIRSF" id="PIRSF006205">
    <property type="entry name" value="Dxp_reductismrs"/>
    <property type="match status" value="1"/>
</dbReference>
<dbReference type="SUPFAM" id="SSF69055">
    <property type="entry name" value="1-deoxy-D-xylulose-5-phosphate reductoisomerase, C-terminal domain"/>
    <property type="match status" value="1"/>
</dbReference>
<dbReference type="SUPFAM" id="SSF55347">
    <property type="entry name" value="Glyceraldehyde-3-phosphate dehydrogenase-like, C-terminal domain"/>
    <property type="match status" value="1"/>
</dbReference>
<dbReference type="SUPFAM" id="SSF51735">
    <property type="entry name" value="NAD(P)-binding Rossmann-fold domains"/>
    <property type="match status" value="1"/>
</dbReference>